<organism>
    <name type="scientific">Schizosaccharomyces pombe (strain 972 / ATCC 24843)</name>
    <name type="common">Fission yeast</name>
    <dbReference type="NCBI Taxonomy" id="284812"/>
    <lineage>
        <taxon>Eukaryota</taxon>
        <taxon>Fungi</taxon>
        <taxon>Dikarya</taxon>
        <taxon>Ascomycota</taxon>
        <taxon>Taphrinomycotina</taxon>
        <taxon>Schizosaccharomycetes</taxon>
        <taxon>Schizosaccharomycetales</taxon>
        <taxon>Schizosaccharomycetaceae</taxon>
        <taxon>Schizosaccharomyces</taxon>
    </lineage>
</organism>
<sequence length="188" mass="21532">MDFNKIGDENVVFQIFKLEMLIMSEFPSFIEEKDKLLCLNVLANLLGGIFENEDKIIPNYKEAVIAALFERLLLSSNQKSTSKSNQMIKLLNNSLAHNNGLPSQRCNHDSKLVYMSLVQNNGLPGQRSNYVCCPLCMEQHCIELLTYQLFAKWRNFPRIDFSPVLQGNRGPRFFYTCFLCNSTFLASA</sequence>
<accession>O42647</accession>
<gene>
    <name type="primary">mug94</name>
    <name type="ORF">SPAC10F6.07c</name>
</gene>
<protein>
    <recommendedName>
        <fullName>Meiotically up-regulated gene 94 protein</fullName>
    </recommendedName>
</protein>
<evidence type="ECO:0000269" key="1">
    <source>
    </source>
</evidence>
<evidence type="ECO:0000269" key="2">
    <source>
    </source>
</evidence>
<reference key="1">
    <citation type="journal article" date="2002" name="Nature">
        <title>The genome sequence of Schizosaccharomyces pombe.</title>
        <authorList>
            <person name="Wood V."/>
            <person name="Gwilliam R."/>
            <person name="Rajandream M.A."/>
            <person name="Lyne M.H."/>
            <person name="Lyne R."/>
            <person name="Stewart A."/>
            <person name="Sgouros J.G."/>
            <person name="Peat N."/>
            <person name="Hayles J."/>
            <person name="Baker S.G."/>
            <person name="Basham D."/>
            <person name="Bowman S."/>
            <person name="Brooks K."/>
            <person name="Brown D."/>
            <person name="Brown S."/>
            <person name="Chillingworth T."/>
            <person name="Churcher C.M."/>
            <person name="Collins M."/>
            <person name="Connor R."/>
            <person name="Cronin A."/>
            <person name="Davis P."/>
            <person name="Feltwell T."/>
            <person name="Fraser A."/>
            <person name="Gentles S."/>
            <person name="Goble A."/>
            <person name="Hamlin N."/>
            <person name="Harris D.E."/>
            <person name="Hidalgo J."/>
            <person name="Hodgson G."/>
            <person name="Holroyd S."/>
            <person name="Hornsby T."/>
            <person name="Howarth S."/>
            <person name="Huckle E.J."/>
            <person name="Hunt S."/>
            <person name="Jagels K."/>
            <person name="James K.D."/>
            <person name="Jones L."/>
            <person name="Jones M."/>
            <person name="Leather S."/>
            <person name="McDonald S."/>
            <person name="McLean J."/>
            <person name="Mooney P."/>
            <person name="Moule S."/>
            <person name="Mungall K.L."/>
            <person name="Murphy L.D."/>
            <person name="Niblett D."/>
            <person name="Odell C."/>
            <person name="Oliver K."/>
            <person name="O'Neil S."/>
            <person name="Pearson D."/>
            <person name="Quail M.A."/>
            <person name="Rabbinowitsch E."/>
            <person name="Rutherford K.M."/>
            <person name="Rutter S."/>
            <person name="Saunders D."/>
            <person name="Seeger K."/>
            <person name="Sharp S."/>
            <person name="Skelton J."/>
            <person name="Simmonds M.N."/>
            <person name="Squares R."/>
            <person name="Squares S."/>
            <person name="Stevens K."/>
            <person name="Taylor K."/>
            <person name="Taylor R.G."/>
            <person name="Tivey A."/>
            <person name="Walsh S.V."/>
            <person name="Warren T."/>
            <person name="Whitehead S."/>
            <person name="Woodward J.R."/>
            <person name="Volckaert G."/>
            <person name="Aert R."/>
            <person name="Robben J."/>
            <person name="Grymonprez B."/>
            <person name="Weltjens I."/>
            <person name="Vanstreels E."/>
            <person name="Rieger M."/>
            <person name="Schaefer M."/>
            <person name="Mueller-Auer S."/>
            <person name="Gabel C."/>
            <person name="Fuchs M."/>
            <person name="Duesterhoeft A."/>
            <person name="Fritzc C."/>
            <person name="Holzer E."/>
            <person name="Moestl D."/>
            <person name="Hilbert H."/>
            <person name="Borzym K."/>
            <person name="Langer I."/>
            <person name="Beck A."/>
            <person name="Lehrach H."/>
            <person name="Reinhardt R."/>
            <person name="Pohl T.M."/>
            <person name="Eger P."/>
            <person name="Zimmermann W."/>
            <person name="Wedler H."/>
            <person name="Wambutt R."/>
            <person name="Purnelle B."/>
            <person name="Goffeau A."/>
            <person name="Cadieu E."/>
            <person name="Dreano S."/>
            <person name="Gloux S."/>
            <person name="Lelaure V."/>
            <person name="Mottier S."/>
            <person name="Galibert F."/>
            <person name="Aves S.J."/>
            <person name="Xiang Z."/>
            <person name="Hunt C."/>
            <person name="Moore K."/>
            <person name="Hurst S.M."/>
            <person name="Lucas M."/>
            <person name="Rochet M."/>
            <person name="Gaillardin C."/>
            <person name="Tallada V.A."/>
            <person name="Garzon A."/>
            <person name="Thode G."/>
            <person name="Daga R.R."/>
            <person name="Cruzado L."/>
            <person name="Jimenez J."/>
            <person name="Sanchez M."/>
            <person name="del Rey F."/>
            <person name="Benito J."/>
            <person name="Dominguez A."/>
            <person name="Revuelta J.L."/>
            <person name="Moreno S."/>
            <person name="Armstrong J."/>
            <person name="Forsburg S.L."/>
            <person name="Cerutti L."/>
            <person name="Lowe T."/>
            <person name="McCombie W.R."/>
            <person name="Paulsen I."/>
            <person name="Potashkin J."/>
            <person name="Shpakovski G.V."/>
            <person name="Ussery D."/>
            <person name="Barrell B.G."/>
            <person name="Nurse P."/>
        </authorList>
    </citation>
    <scope>NUCLEOTIDE SEQUENCE [LARGE SCALE GENOMIC DNA]</scope>
    <source>
        <strain>972 / ATCC 24843</strain>
    </source>
</reference>
<reference key="2">
    <citation type="journal article" date="2005" name="Curr. Biol.">
        <title>A large-scale screen in S. pombe identifies seven novel genes required for critical meiotic events.</title>
        <authorList>
            <person name="Martin-Castellanos C."/>
            <person name="Blanco M."/>
            <person name="Rozalen A.E."/>
            <person name="Perez-Hidalgo L."/>
            <person name="Garcia A.I."/>
            <person name="Conde F."/>
            <person name="Mata J."/>
            <person name="Ellermeier C."/>
            <person name="Davis L."/>
            <person name="San-Segundo P."/>
            <person name="Smith G.R."/>
            <person name="Moreno S."/>
        </authorList>
    </citation>
    <scope>FUNCTION IN MEIOSIS</scope>
</reference>
<reference key="3">
    <citation type="journal article" date="2006" name="Nat. Biotechnol.">
        <title>ORFeome cloning and global analysis of protein localization in the fission yeast Schizosaccharomyces pombe.</title>
        <authorList>
            <person name="Matsuyama A."/>
            <person name="Arai R."/>
            <person name="Yashiroda Y."/>
            <person name="Shirai A."/>
            <person name="Kamata A."/>
            <person name="Sekido S."/>
            <person name="Kobayashi Y."/>
            <person name="Hashimoto A."/>
            <person name="Hamamoto M."/>
            <person name="Hiraoka Y."/>
            <person name="Horinouchi S."/>
            <person name="Yoshida M."/>
        </authorList>
    </citation>
    <scope>SUBCELLULAR LOCATION [LARGE SCALE ANALYSIS]</scope>
</reference>
<keyword id="KW-0963">Cytoplasm</keyword>
<keyword id="KW-0469">Meiosis</keyword>
<keyword id="KW-0539">Nucleus</keyword>
<keyword id="KW-1185">Reference proteome</keyword>
<proteinExistence type="evidence at protein level"/>
<name>MUG94_SCHPO</name>
<comment type="function">
    <text evidence="1">Has a role in meiosis.</text>
</comment>
<comment type="subcellular location">
    <subcellularLocation>
        <location evidence="2">Cytoplasm</location>
    </subcellularLocation>
    <subcellularLocation>
        <location evidence="2">Nucleus</location>
    </subcellularLocation>
</comment>
<feature type="chain" id="PRO_0000278615" description="Meiotically up-regulated gene 94 protein">
    <location>
        <begin position="1"/>
        <end position="188"/>
    </location>
</feature>
<dbReference type="EMBL" id="CU329670">
    <property type="protein sequence ID" value="CAA15720.1"/>
    <property type="molecule type" value="Genomic_DNA"/>
</dbReference>
<dbReference type="PIR" id="T37501">
    <property type="entry name" value="T37501"/>
</dbReference>
<dbReference type="RefSeq" id="NP_593258.1">
    <property type="nucleotide sequence ID" value="NM_001018655.1"/>
</dbReference>
<dbReference type="BioGRID" id="279375">
    <property type="interactions" value="4"/>
</dbReference>
<dbReference type="PaxDb" id="4896-SPAC10F6.07c.1"/>
<dbReference type="EnsemblFungi" id="SPAC10F6.07c.1">
    <property type="protein sequence ID" value="SPAC10F6.07c.1:pep"/>
    <property type="gene ID" value="SPAC10F6.07c"/>
</dbReference>
<dbReference type="GeneID" id="2542934"/>
<dbReference type="KEGG" id="spo:2542934"/>
<dbReference type="PomBase" id="SPAC10F6.07c">
    <property type="gene designation" value="mug94"/>
</dbReference>
<dbReference type="VEuPathDB" id="FungiDB:SPAC10F6.07c"/>
<dbReference type="HOGENOM" id="CLU_1441819_0_0_1"/>
<dbReference type="InParanoid" id="O42647"/>
<dbReference type="PRO" id="PR:O42647"/>
<dbReference type="Proteomes" id="UP000002485">
    <property type="component" value="Chromosome I"/>
</dbReference>
<dbReference type="GO" id="GO:0005737">
    <property type="term" value="C:cytoplasm"/>
    <property type="evidence" value="ECO:0007005"/>
    <property type="project" value="PomBase"/>
</dbReference>
<dbReference type="GO" id="GO:0005829">
    <property type="term" value="C:cytosol"/>
    <property type="evidence" value="ECO:0007005"/>
    <property type="project" value="PomBase"/>
</dbReference>
<dbReference type="GO" id="GO:0005634">
    <property type="term" value="C:nucleus"/>
    <property type="evidence" value="ECO:0007005"/>
    <property type="project" value="PomBase"/>
</dbReference>
<dbReference type="GO" id="GO:0051321">
    <property type="term" value="P:meiotic cell cycle"/>
    <property type="evidence" value="ECO:0007669"/>
    <property type="project" value="UniProtKB-KW"/>
</dbReference>